<organism>
    <name type="scientific">Glycine max</name>
    <name type="common">Soybean</name>
    <name type="synonym">Glycine hispida</name>
    <dbReference type="NCBI Taxonomy" id="3847"/>
    <lineage>
        <taxon>Eukaryota</taxon>
        <taxon>Viridiplantae</taxon>
        <taxon>Streptophyta</taxon>
        <taxon>Embryophyta</taxon>
        <taxon>Tracheophyta</taxon>
        <taxon>Spermatophyta</taxon>
        <taxon>Magnoliopsida</taxon>
        <taxon>eudicotyledons</taxon>
        <taxon>Gunneridae</taxon>
        <taxon>Pentapetalae</taxon>
        <taxon>rosids</taxon>
        <taxon>fabids</taxon>
        <taxon>Fabales</taxon>
        <taxon>Fabaceae</taxon>
        <taxon>Papilionoideae</taxon>
        <taxon>50 kb inversion clade</taxon>
        <taxon>NPAAA clade</taxon>
        <taxon>indigoferoid/millettioid clade</taxon>
        <taxon>Phaseoleae</taxon>
        <taxon>Glycine</taxon>
        <taxon>Glycine subgen. Soja</taxon>
    </lineage>
</organism>
<evidence type="ECO:0000255" key="1"/>
<evidence type="ECO:0000305" key="2"/>
<dbReference type="EMBL" id="M10595">
    <property type="protein sequence ID" value="AAA33993.1"/>
    <property type="molecule type" value="Genomic_DNA"/>
</dbReference>
<dbReference type="PIR" id="A03342">
    <property type="entry name" value="ZZSYN2"/>
</dbReference>
<dbReference type="STRING" id="3847.P04145"/>
<dbReference type="PaxDb" id="3847-GLYMA14G05690.1"/>
<dbReference type="InParanoid" id="P04145"/>
<dbReference type="Proteomes" id="UP000008827">
    <property type="component" value="Unplaced"/>
</dbReference>
<dbReference type="GO" id="GO:0043661">
    <property type="term" value="C:peribacteroid membrane"/>
    <property type="evidence" value="ECO:0007669"/>
    <property type="project" value="UniProtKB-SubCell"/>
</dbReference>
<dbReference type="GO" id="GO:0009877">
    <property type="term" value="P:nodulation"/>
    <property type="evidence" value="ECO:0007669"/>
    <property type="project" value="UniProtKB-KW"/>
</dbReference>
<dbReference type="InterPro" id="IPR010800">
    <property type="entry name" value="GRP"/>
</dbReference>
<dbReference type="PANTHER" id="PTHR37389">
    <property type="entry name" value="NODULIN-24"/>
    <property type="match status" value="1"/>
</dbReference>
<dbReference type="PANTHER" id="PTHR37389:SF40">
    <property type="entry name" value="NODULIN-24"/>
    <property type="match status" value="1"/>
</dbReference>
<reference key="1">
    <citation type="journal article" date="1985" name="Proc. Natl. Acad. Sci. U.S.A.">
        <title>Nodulin-24 gene of soybean codes for a peptide of the peribacteroid membrane and was generated by tandem duplication of a sequence resembling an insertion element.</title>
        <authorList>
            <person name="Katinakis P."/>
            <person name="Verma D.P.S."/>
        </authorList>
    </citation>
    <scope>NUCLEOTIDE SEQUENCE [GENOMIC DNA]</scope>
</reference>
<reference key="2">
    <citation type="journal article" date="1985" name="Proc. Natl. Acad. Sci. U.S.A.">
        <authorList>
            <person name="Katinakis P."/>
            <person name="Verma D.P.S."/>
        </authorList>
    </citation>
    <scope>ERRATUM OF PUBMED:16593576</scope>
</reference>
<keyword id="KW-0472">Membrane</keyword>
<keyword id="KW-0536">Nodulation</keyword>
<keyword id="KW-1185">Reference proteome</keyword>
<keyword id="KW-0677">Repeat</keyword>
<keyword id="KW-0732">Signal</keyword>
<accession>P04145</accession>
<name>NO24_SOYBN</name>
<protein>
    <recommendedName>
        <fullName>Nodulin-24</fullName>
        <shortName>N-24</shortName>
    </recommendedName>
</protein>
<sequence>MGSKMAILILGLLAMLLLITSEVAARNLKEAGEAVQETNEVADAKLVAAGEAVQETNEVADTKLVGAGEAVQETNEVADTKLVGAGGVVKQRNKVGYGKLVGVGGYDYGNWNGGQRSPYGTGAICMRGCCFPSSLGGSVSCCPHEWQ</sequence>
<feature type="signal peptide" evidence="1">
    <location>
        <begin position="1"/>
        <end position="25"/>
    </location>
</feature>
<feature type="chain" id="PRO_0000019797" description="Nodulin-24">
    <location>
        <begin position="26"/>
        <end position="147"/>
    </location>
</feature>
<feature type="repeat" description="1">
    <location>
        <begin position="31"/>
        <end position="48"/>
    </location>
</feature>
<feature type="repeat" description="2">
    <location>
        <begin position="49"/>
        <end position="66"/>
    </location>
</feature>
<feature type="repeat" description="3">
    <location>
        <begin position="67"/>
        <end position="84"/>
    </location>
</feature>
<feature type="repeat" description="4; truncated">
    <location>
        <begin position="85"/>
        <end position="92"/>
    </location>
</feature>
<feature type="region of interest" description="3.5 X 18 AA tandem repeats">
    <location>
        <begin position="31"/>
        <end position="92"/>
    </location>
</feature>
<proteinExistence type="evidence at transcript level"/>
<comment type="subcellular location">
    <subcellularLocation>
        <location>Symbiosome</location>
        <location>Peribacteroid membrane</location>
    </subcellularLocation>
    <text>Integral part of the peribacteroid membrane, a compartment essential for effective symbiotic nitrogen fixation.</text>
</comment>
<comment type="induction">
    <text>During nodulation in legume roots after Rhizobium infection.</text>
</comment>
<comment type="similarity">
    <text evidence="2">Belongs to the GRP family.</text>
</comment>